<comment type="function">
    <text evidence="1">Involved in peptide bond synthesis. Stimulates efficient translation and peptide-bond synthesis on native or reconstituted 70S ribosomes in vitro. Probably functions indirectly by altering the affinity of the ribosome for aminoacyl-tRNA, thus increasing their reactivity as acceptors for peptidyl transferase.</text>
</comment>
<comment type="pathway">
    <text evidence="1">Protein biosynthesis; polypeptide chain elongation.</text>
</comment>
<comment type="subcellular location">
    <subcellularLocation>
        <location evidence="1">Cytoplasm</location>
    </subcellularLocation>
</comment>
<comment type="similarity">
    <text evidence="1">Belongs to the elongation factor P family.</text>
</comment>
<protein>
    <recommendedName>
        <fullName evidence="1">Elongation factor P</fullName>
        <shortName evidence="1">EF-P</shortName>
    </recommendedName>
</protein>
<dbReference type="EMBL" id="CT971583">
    <property type="protein sequence ID" value="CAK22458.1"/>
    <property type="molecule type" value="Genomic_DNA"/>
</dbReference>
<dbReference type="SMR" id="A5GHP3"/>
<dbReference type="STRING" id="32051.SynWH7803_0032"/>
<dbReference type="KEGG" id="syx:SynWH7803_0032"/>
<dbReference type="eggNOG" id="COG0231">
    <property type="taxonomic scope" value="Bacteria"/>
</dbReference>
<dbReference type="HOGENOM" id="CLU_074944_0_1_3"/>
<dbReference type="OrthoDB" id="9801844at2"/>
<dbReference type="UniPathway" id="UPA00345"/>
<dbReference type="Proteomes" id="UP000001566">
    <property type="component" value="Chromosome"/>
</dbReference>
<dbReference type="GO" id="GO:0005737">
    <property type="term" value="C:cytoplasm"/>
    <property type="evidence" value="ECO:0007669"/>
    <property type="project" value="UniProtKB-SubCell"/>
</dbReference>
<dbReference type="GO" id="GO:0003746">
    <property type="term" value="F:translation elongation factor activity"/>
    <property type="evidence" value="ECO:0007669"/>
    <property type="project" value="UniProtKB-UniRule"/>
</dbReference>
<dbReference type="GO" id="GO:0043043">
    <property type="term" value="P:peptide biosynthetic process"/>
    <property type="evidence" value="ECO:0007669"/>
    <property type="project" value="InterPro"/>
</dbReference>
<dbReference type="CDD" id="cd04470">
    <property type="entry name" value="S1_EF-P_repeat_1"/>
    <property type="match status" value="1"/>
</dbReference>
<dbReference type="CDD" id="cd05794">
    <property type="entry name" value="S1_EF-P_repeat_2"/>
    <property type="match status" value="1"/>
</dbReference>
<dbReference type="FunFam" id="2.30.30.30:FF:000003">
    <property type="entry name" value="Elongation factor P"/>
    <property type="match status" value="1"/>
</dbReference>
<dbReference type="FunFam" id="2.40.50.140:FF:000004">
    <property type="entry name" value="Elongation factor P"/>
    <property type="match status" value="1"/>
</dbReference>
<dbReference type="FunFam" id="2.40.50.140:FF:000009">
    <property type="entry name" value="Elongation factor P"/>
    <property type="match status" value="1"/>
</dbReference>
<dbReference type="Gene3D" id="2.30.30.30">
    <property type="match status" value="1"/>
</dbReference>
<dbReference type="Gene3D" id="2.40.50.140">
    <property type="entry name" value="Nucleic acid-binding proteins"/>
    <property type="match status" value="2"/>
</dbReference>
<dbReference type="HAMAP" id="MF_00141">
    <property type="entry name" value="EF_P"/>
    <property type="match status" value="1"/>
</dbReference>
<dbReference type="InterPro" id="IPR015365">
    <property type="entry name" value="Elong-fact-P_C"/>
</dbReference>
<dbReference type="InterPro" id="IPR012340">
    <property type="entry name" value="NA-bd_OB-fold"/>
</dbReference>
<dbReference type="InterPro" id="IPR014722">
    <property type="entry name" value="Rib_uL2_dom2"/>
</dbReference>
<dbReference type="InterPro" id="IPR020599">
    <property type="entry name" value="Transl_elong_fac_P/YeiP"/>
</dbReference>
<dbReference type="InterPro" id="IPR013185">
    <property type="entry name" value="Transl_elong_KOW-like"/>
</dbReference>
<dbReference type="InterPro" id="IPR001059">
    <property type="entry name" value="Transl_elong_P/YeiP_cen"/>
</dbReference>
<dbReference type="InterPro" id="IPR013852">
    <property type="entry name" value="Transl_elong_P/YeiP_CS"/>
</dbReference>
<dbReference type="InterPro" id="IPR011768">
    <property type="entry name" value="Transl_elongation_fac_P"/>
</dbReference>
<dbReference type="InterPro" id="IPR008991">
    <property type="entry name" value="Translation_prot_SH3-like_sf"/>
</dbReference>
<dbReference type="NCBIfam" id="TIGR00038">
    <property type="entry name" value="efp"/>
    <property type="match status" value="1"/>
</dbReference>
<dbReference type="NCBIfam" id="NF001810">
    <property type="entry name" value="PRK00529.1"/>
    <property type="match status" value="1"/>
</dbReference>
<dbReference type="PANTHER" id="PTHR30053">
    <property type="entry name" value="ELONGATION FACTOR P"/>
    <property type="match status" value="1"/>
</dbReference>
<dbReference type="PANTHER" id="PTHR30053:SF12">
    <property type="entry name" value="ELONGATION FACTOR P (EF-P) FAMILY PROTEIN"/>
    <property type="match status" value="1"/>
</dbReference>
<dbReference type="Pfam" id="PF01132">
    <property type="entry name" value="EFP"/>
    <property type="match status" value="1"/>
</dbReference>
<dbReference type="Pfam" id="PF08207">
    <property type="entry name" value="EFP_N"/>
    <property type="match status" value="1"/>
</dbReference>
<dbReference type="Pfam" id="PF09285">
    <property type="entry name" value="Elong-fact-P_C"/>
    <property type="match status" value="1"/>
</dbReference>
<dbReference type="PIRSF" id="PIRSF005901">
    <property type="entry name" value="EF-P"/>
    <property type="match status" value="1"/>
</dbReference>
<dbReference type="SMART" id="SM01185">
    <property type="entry name" value="EFP"/>
    <property type="match status" value="1"/>
</dbReference>
<dbReference type="SMART" id="SM00841">
    <property type="entry name" value="Elong-fact-P_C"/>
    <property type="match status" value="1"/>
</dbReference>
<dbReference type="SUPFAM" id="SSF50249">
    <property type="entry name" value="Nucleic acid-binding proteins"/>
    <property type="match status" value="2"/>
</dbReference>
<dbReference type="SUPFAM" id="SSF50104">
    <property type="entry name" value="Translation proteins SH3-like domain"/>
    <property type="match status" value="1"/>
</dbReference>
<dbReference type="PROSITE" id="PS01275">
    <property type="entry name" value="EFP"/>
    <property type="match status" value="1"/>
</dbReference>
<feature type="chain" id="PRO_1000010884" description="Elongation factor P">
    <location>
        <begin position="1"/>
        <end position="187"/>
    </location>
</feature>
<organism>
    <name type="scientific">Synechococcus sp. (strain WH7803)</name>
    <dbReference type="NCBI Taxonomy" id="32051"/>
    <lineage>
        <taxon>Bacteria</taxon>
        <taxon>Bacillati</taxon>
        <taxon>Cyanobacteriota</taxon>
        <taxon>Cyanophyceae</taxon>
        <taxon>Synechococcales</taxon>
        <taxon>Synechococcaceae</taxon>
        <taxon>Synechococcus</taxon>
    </lineage>
</organism>
<keyword id="KW-0963">Cytoplasm</keyword>
<keyword id="KW-0251">Elongation factor</keyword>
<keyword id="KW-0648">Protein biosynthesis</keyword>
<keyword id="KW-1185">Reference proteome</keyword>
<evidence type="ECO:0000255" key="1">
    <source>
        <dbReference type="HAMAP-Rule" id="MF_00141"/>
    </source>
</evidence>
<sequence>MISSNDFRTGTTIELDGAVWRVVEFLHVKPGKGSAFVRTKLKAVQSGNVVEKTFRAGEMLPQAILEKATLQHTYMEGEDYVFMDMGTYEETRLSAKQIGESRKYLKEGMEVNVVSWNDKPLEVELPNSVVLEIKETDPGVKGDTATGGTKPAILETGAQVMVPLFLSIGEKIKVDTRNDTYLGRENS</sequence>
<proteinExistence type="inferred from homology"/>
<reference key="1">
    <citation type="submission" date="2006-05" db="EMBL/GenBank/DDBJ databases">
        <authorList>
            <consortium name="Genoscope"/>
        </authorList>
    </citation>
    <scope>NUCLEOTIDE SEQUENCE [LARGE SCALE GENOMIC DNA]</scope>
    <source>
        <strain>WH7803</strain>
    </source>
</reference>
<gene>
    <name evidence="1" type="primary">efp</name>
    <name type="ordered locus">SynWH7803_0032</name>
</gene>
<accession>A5GHP3</accession>
<name>EFP_SYNPW</name>